<dbReference type="EC" id="2.7.4.25" evidence="1"/>
<dbReference type="EMBL" id="AP006716">
    <property type="protein sequence ID" value="BAE04743.1"/>
    <property type="molecule type" value="Genomic_DNA"/>
</dbReference>
<dbReference type="RefSeq" id="WP_011275729.1">
    <property type="nucleotide sequence ID" value="NC_007168.1"/>
</dbReference>
<dbReference type="SMR" id="Q4L6I2"/>
<dbReference type="GeneID" id="93780831"/>
<dbReference type="KEGG" id="sha:SH1434"/>
<dbReference type="eggNOG" id="COG0283">
    <property type="taxonomic scope" value="Bacteria"/>
</dbReference>
<dbReference type="HOGENOM" id="CLU_079959_0_2_9"/>
<dbReference type="OrthoDB" id="9807434at2"/>
<dbReference type="Proteomes" id="UP000000543">
    <property type="component" value="Chromosome"/>
</dbReference>
<dbReference type="GO" id="GO:0005829">
    <property type="term" value="C:cytosol"/>
    <property type="evidence" value="ECO:0007669"/>
    <property type="project" value="TreeGrafter"/>
</dbReference>
<dbReference type="GO" id="GO:0005524">
    <property type="term" value="F:ATP binding"/>
    <property type="evidence" value="ECO:0007669"/>
    <property type="project" value="UniProtKB-UniRule"/>
</dbReference>
<dbReference type="GO" id="GO:0036430">
    <property type="term" value="F:CMP kinase activity"/>
    <property type="evidence" value="ECO:0007669"/>
    <property type="project" value="RHEA"/>
</dbReference>
<dbReference type="GO" id="GO:0036431">
    <property type="term" value="F:dCMP kinase activity"/>
    <property type="evidence" value="ECO:0007669"/>
    <property type="project" value="RHEA"/>
</dbReference>
<dbReference type="GO" id="GO:0015949">
    <property type="term" value="P:nucleobase-containing small molecule interconversion"/>
    <property type="evidence" value="ECO:0007669"/>
    <property type="project" value="TreeGrafter"/>
</dbReference>
<dbReference type="GO" id="GO:0006220">
    <property type="term" value="P:pyrimidine nucleotide metabolic process"/>
    <property type="evidence" value="ECO:0007669"/>
    <property type="project" value="UniProtKB-UniRule"/>
</dbReference>
<dbReference type="CDD" id="cd02020">
    <property type="entry name" value="CMPK"/>
    <property type="match status" value="1"/>
</dbReference>
<dbReference type="Gene3D" id="3.40.50.300">
    <property type="entry name" value="P-loop containing nucleotide triphosphate hydrolases"/>
    <property type="match status" value="1"/>
</dbReference>
<dbReference type="HAMAP" id="MF_00238">
    <property type="entry name" value="Cytidyl_kinase_type1"/>
    <property type="match status" value="1"/>
</dbReference>
<dbReference type="InterPro" id="IPR003136">
    <property type="entry name" value="Cytidylate_kin"/>
</dbReference>
<dbReference type="InterPro" id="IPR011994">
    <property type="entry name" value="Cytidylate_kinase_dom"/>
</dbReference>
<dbReference type="InterPro" id="IPR027417">
    <property type="entry name" value="P-loop_NTPase"/>
</dbReference>
<dbReference type="NCBIfam" id="TIGR00017">
    <property type="entry name" value="cmk"/>
    <property type="match status" value="1"/>
</dbReference>
<dbReference type="PANTHER" id="PTHR21299:SF2">
    <property type="entry name" value="CYTIDYLATE KINASE"/>
    <property type="match status" value="1"/>
</dbReference>
<dbReference type="PANTHER" id="PTHR21299">
    <property type="entry name" value="CYTIDYLATE KINASE/PANTOATE-BETA-ALANINE LIGASE"/>
    <property type="match status" value="1"/>
</dbReference>
<dbReference type="Pfam" id="PF02224">
    <property type="entry name" value="Cytidylate_kin"/>
    <property type="match status" value="1"/>
</dbReference>
<dbReference type="SUPFAM" id="SSF52540">
    <property type="entry name" value="P-loop containing nucleoside triphosphate hydrolases"/>
    <property type="match status" value="1"/>
</dbReference>
<organism>
    <name type="scientific">Staphylococcus haemolyticus (strain JCSC1435)</name>
    <dbReference type="NCBI Taxonomy" id="279808"/>
    <lineage>
        <taxon>Bacteria</taxon>
        <taxon>Bacillati</taxon>
        <taxon>Bacillota</taxon>
        <taxon>Bacilli</taxon>
        <taxon>Bacillales</taxon>
        <taxon>Staphylococcaceae</taxon>
        <taxon>Staphylococcus</taxon>
    </lineage>
</organism>
<reference key="1">
    <citation type="journal article" date="2005" name="J. Bacteriol.">
        <title>Whole-genome sequencing of Staphylococcus haemolyticus uncovers the extreme plasticity of its genome and the evolution of human-colonizing staphylococcal species.</title>
        <authorList>
            <person name="Takeuchi F."/>
            <person name="Watanabe S."/>
            <person name="Baba T."/>
            <person name="Yuzawa H."/>
            <person name="Ito T."/>
            <person name="Morimoto Y."/>
            <person name="Kuroda M."/>
            <person name="Cui L."/>
            <person name="Takahashi M."/>
            <person name="Ankai A."/>
            <person name="Baba S."/>
            <person name="Fukui S."/>
            <person name="Lee J.C."/>
            <person name="Hiramatsu K."/>
        </authorList>
    </citation>
    <scope>NUCLEOTIDE SEQUENCE [LARGE SCALE GENOMIC DNA]</scope>
    <source>
        <strain>JCSC1435</strain>
    </source>
</reference>
<protein>
    <recommendedName>
        <fullName evidence="1">Cytidylate kinase</fullName>
        <shortName evidence="1">CK</shortName>
        <ecNumber evidence="1">2.7.4.25</ecNumber>
    </recommendedName>
    <alternativeName>
        <fullName evidence="1">Cytidine monophosphate kinase</fullName>
        <shortName evidence="1">CMP kinase</shortName>
    </alternativeName>
</protein>
<evidence type="ECO:0000255" key="1">
    <source>
        <dbReference type="HAMAP-Rule" id="MF_00238"/>
    </source>
</evidence>
<feature type="chain" id="PRO_1000048291" description="Cytidylate kinase">
    <location>
        <begin position="1"/>
        <end position="218"/>
    </location>
</feature>
<feature type="binding site" evidence="1">
    <location>
        <begin position="10"/>
        <end position="18"/>
    </location>
    <ligand>
        <name>ATP</name>
        <dbReference type="ChEBI" id="CHEBI:30616"/>
    </ligand>
</feature>
<name>KCY_STAHJ</name>
<keyword id="KW-0067">ATP-binding</keyword>
<keyword id="KW-0963">Cytoplasm</keyword>
<keyword id="KW-0418">Kinase</keyword>
<keyword id="KW-0547">Nucleotide-binding</keyword>
<keyword id="KW-0808">Transferase</keyword>
<proteinExistence type="inferred from homology"/>
<comment type="catalytic activity">
    <reaction evidence="1">
        <text>CMP + ATP = CDP + ADP</text>
        <dbReference type="Rhea" id="RHEA:11600"/>
        <dbReference type="ChEBI" id="CHEBI:30616"/>
        <dbReference type="ChEBI" id="CHEBI:58069"/>
        <dbReference type="ChEBI" id="CHEBI:60377"/>
        <dbReference type="ChEBI" id="CHEBI:456216"/>
        <dbReference type="EC" id="2.7.4.25"/>
    </reaction>
</comment>
<comment type="catalytic activity">
    <reaction evidence="1">
        <text>dCMP + ATP = dCDP + ADP</text>
        <dbReference type="Rhea" id="RHEA:25094"/>
        <dbReference type="ChEBI" id="CHEBI:30616"/>
        <dbReference type="ChEBI" id="CHEBI:57566"/>
        <dbReference type="ChEBI" id="CHEBI:58593"/>
        <dbReference type="ChEBI" id="CHEBI:456216"/>
        <dbReference type="EC" id="2.7.4.25"/>
    </reaction>
</comment>
<comment type="subcellular location">
    <subcellularLocation>
        <location evidence="1">Cytoplasm</location>
    </subcellularLocation>
</comment>
<comment type="similarity">
    <text evidence="1">Belongs to the cytidylate kinase family. Type 1 subfamily.</text>
</comment>
<accession>Q4L6I2</accession>
<gene>
    <name evidence="1" type="primary">cmk</name>
    <name type="ordered locus">SH1434</name>
</gene>
<sequence length="218" mass="24563">MDLINIALDGPAAAGKSTIARQVASKLSMIYVDTGAMYRAITYKYLQNDKPEDFKTLVNQTTLELTYDKSKGQRILLDNQDVTDFLRENDVTQNVSYVASKEPVRTFAVEKQKDLAAKKGIVMDGRDIGTVVLPDAELKVFMIASVEERAERRQKENEQRGIPSTLSQLKKEIEERDHYDMNRDISPLKKADDAVTVDTTGKTIEEVTEEIMTLVNNI</sequence>